<gene>
    <name evidence="1" type="primary">hemE</name>
    <name type="ordered locus">SA1652</name>
</gene>
<name>DCUP_STAAN</name>
<feature type="chain" id="PRO_0000187641" description="Uroporphyrinogen decarboxylase">
    <location>
        <begin position="1"/>
        <end position="345"/>
    </location>
</feature>
<feature type="binding site" evidence="1">
    <location>
        <begin position="27"/>
        <end position="31"/>
    </location>
    <ligand>
        <name>substrate</name>
    </ligand>
</feature>
<feature type="binding site" evidence="1">
    <location>
        <position position="46"/>
    </location>
    <ligand>
        <name>substrate</name>
    </ligand>
</feature>
<feature type="binding site" evidence="1">
    <location>
        <position position="76"/>
    </location>
    <ligand>
        <name>substrate</name>
    </ligand>
</feature>
<feature type="binding site" evidence="1">
    <location>
        <position position="152"/>
    </location>
    <ligand>
        <name>substrate</name>
    </ligand>
</feature>
<feature type="binding site" evidence="1">
    <location>
        <position position="207"/>
    </location>
    <ligand>
        <name>substrate</name>
    </ligand>
</feature>
<feature type="binding site" evidence="1">
    <location>
        <position position="321"/>
    </location>
    <ligand>
        <name>substrate</name>
    </ligand>
</feature>
<feature type="site" description="Transition state stabilizer" evidence="1">
    <location>
        <position position="76"/>
    </location>
</feature>
<dbReference type="EC" id="4.1.1.37" evidence="1"/>
<dbReference type="EMBL" id="BA000018">
    <property type="protein sequence ID" value="BAB42920.1"/>
    <property type="molecule type" value="Genomic_DNA"/>
</dbReference>
<dbReference type="PIR" id="A89970">
    <property type="entry name" value="A89970"/>
</dbReference>
<dbReference type="RefSeq" id="WP_000233526.1">
    <property type="nucleotide sequence ID" value="NC_002745.2"/>
</dbReference>
<dbReference type="SMR" id="P67420"/>
<dbReference type="EnsemblBacteria" id="BAB42920">
    <property type="protein sequence ID" value="BAB42920"/>
    <property type="gene ID" value="BAB42920"/>
</dbReference>
<dbReference type="KEGG" id="sau:SA1652"/>
<dbReference type="HOGENOM" id="CLU_040933_0_1_9"/>
<dbReference type="UniPathway" id="UPA00251">
    <property type="reaction ID" value="UER00321"/>
</dbReference>
<dbReference type="GO" id="GO:0005829">
    <property type="term" value="C:cytosol"/>
    <property type="evidence" value="ECO:0007669"/>
    <property type="project" value="TreeGrafter"/>
</dbReference>
<dbReference type="GO" id="GO:0004853">
    <property type="term" value="F:uroporphyrinogen decarboxylase activity"/>
    <property type="evidence" value="ECO:0007669"/>
    <property type="project" value="UniProtKB-UniRule"/>
</dbReference>
<dbReference type="GO" id="GO:0006782">
    <property type="term" value="P:protoporphyrinogen IX biosynthetic process"/>
    <property type="evidence" value="ECO:0007669"/>
    <property type="project" value="UniProtKB-UniRule"/>
</dbReference>
<dbReference type="CDD" id="cd00717">
    <property type="entry name" value="URO-D"/>
    <property type="match status" value="1"/>
</dbReference>
<dbReference type="FunFam" id="3.20.20.210:FF:000005">
    <property type="entry name" value="Uroporphyrinogen decarboxylase"/>
    <property type="match status" value="1"/>
</dbReference>
<dbReference type="Gene3D" id="3.20.20.210">
    <property type="match status" value="1"/>
</dbReference>
<dbReference type="HAMAP" id="MF_00218">
    <property type="entry name" value="URO_D"/>
    <property type="match status" value="1"/>
</dbReference>
<dbReference type="InterPro" id="IPR038071">
    <property type="entry name" value="UROD/MetE-like_sf"/>
</dbReference>
<dbReference type="InterPro" id="IPR006361">
    <property type="entry name" value="Uroporphyrinogen_deCO2ase_HemE"/>
</dbReference>
<dbReference type="InterPro" id="IPR000257">
    <property type="entry name" value="Uroporphyrinogen_deCOase"/>
</dbReference>
<dbReference type="NCBIfam" id="TIGR01464">
    <property type="entry name" value="hemE"/>
    <property type="match status" value="1"/>
</dbReference>
<dbReference type="PANTHER" id="PTHR21091">
    <property type="entry name" value="METHYLTETRAHYDROFOLATE:HOMOCYSTEINE METHYLTRANSFERASE RELATED"/>
    <property type="match status" value="1"/>
</dbReference>
<dbReference type="PANTHER" id="PTHR21091:SF169">
    <property type="entry name" value="UROPORPHYRINOGEN DECARBOXYLASE"/>
    <property type="match status" value="1"/>
</dbReference>
<dbReference type="Pfam" id="PF01208">
    <property type="entry name" value="URO-D"/>
    <property type="match status" value="1"/>
</dbReference>
<dbReference type="SUPFAM" id="SSF51726">
    <property type="entry name" value="UROD/MetE-like"/>
    <property type="match status" value="1"/>
</dbReference>
<dbReference type="PROSITE" id="PS00906">
    <property type="entry name" value="UROD_1"/>
    <property type="match status" value="1"/>
</dbReference>
<dbReference type="PROSITE" id="PS00907">
    <property type="entry name" value="UROD_2"/>
    <property type="match status" value="1"/>
</dbReference>
<accession>P67420</accession>
<accession>Q99T42</accession>
<organism>
    <name type="scientific">Staphylococcus aureus (strain N315)</name>
    <dbReference type="NCBI Taxonomy" id="158879"/>
    <lineage>
        <taxon>Bacteria</taxon>
        <taxon>Bacillati</taxon>
        <taxon>Bacillota</taxon>
        <taxon>Bacilli</taxon>
        <taxon>Bacillales</taxon>
        <taxon>Staphylococcaceae</taxon>
        <taxon>Staphylococcus</taxon>
    </lineage>
</organism>
<evidence type="ECO:0000255" key="1">
    <source>
        <dbReference type="HAMAP-Rule" id="MF_00218"/>
    </source>
</evidence>
<sequence length="345" mass="39352">MVHNKNNTILKMIKGEETSHTPVWFMRQAGRSQPEYRKLKEKYSLFDITHQPELCAYVTHLPVDNYHTDAAILYKDIMTPLKPIGVDVEIKSGIGPVIHNPIKTIQDVEKLSQIDPERDVPYVLDTIKLLTEEKLNVPLIGFTGAPFTLASYMIEGGPSKNYNFTKAMMYRDEATWFALMNHLVDVSVKYVTAQVEAGAELIQIFDSWVGALNVEDYRRYIKPHMIRLISEVKEKHDVPVILFGVGASHLINEWNDLPIDVLGLDWRTSINQAQQLGVTKTLQGNLDPSILLAPWNVIEERLKPILDQGMENGKHIFNLGHGVFPEVQPETLRKVSEFVHTYTQR</sequence>
<protein>
    <recommendedName>
        <fullName evidence="1">Uroporphyrinogen decarboxylase</fullName>
        <shortName evidence="1">UPD</shortName>
        <shortName evidence="1">URO-D</shortName>
        <ecNumber evidence="1">4.1.1.37</ecNumber>
    </recommendedName>
</protein>
<keyword id="KW-0963">Cytoplasm</keyword>
<keyword id="KW-0210">Decarboxylase</keyword>
<keyword id="KW-0456">Lyase</keyword>
<keyword id="KW-0627">Porphyrin biosynthesis</keyword>
<proteinExistence type="evidence at protein level"/>
<reference key="1">
    <citation type="journal article" date="2001" name="Lancet">
        <title>Whole genome sequencing of meticillin-resistant Staphylococcus aureus.</title>
        <authorList>
            <person name="Kuroda M."/>
            <person name="Ohta T."/>
            <person name="Uchiyama I."/>
            <person name="Baba T."/>
            <person name="Yuzawa H."/>
            <person name="Kobayashi I."/>
            <person name="Cui L."/>
            <person name="Oguchi A."/>
            <person name="Aoki K."/>
            <person name="Nagai Y."/>
            <person name="Lian J.-Q."/>
            <person name="Ito T."/>
            <person name="Kanamori M."/>
            <person name="Matsumaru H."/>
            <person name="Maruyama A."/>
            <person name="Murakami H."/>
            <person name="Hosoyama A."/>
            <person name="Mizutani-Ui Y."/>
            <person name="Takahashi N.K."/>
            <person name="Sawano T."/>
            <person name="Inoue R."/>
            <person name="Kaito C."/>
            <person name="Sekimizu K."/>
            <person name="Hirakawa H."/>
            <person name="Kuhara S."/>
            <person name="Goto S."/>
            <person name="Yabuzaki J."/>
            <person name="Kanehisa M."/>
            <person name="Yamashita A."/>
            <person name="Oshima K."/>
            <person name="Furuya K."/>
            <person name="Yoshino C."/>
            <person name="Shiba T."/>
            <person name="Hattori M."/>
            <person name="Ogasawara N."/>
            <person name="Hayashi H."/>
            <person name="Hiramatsu K."/>
        </authorList>
    </citation>
    <scope>NUCLEOTIDE SEQUENCE [LARGE SCALE GENOMIC DNA]</scope>
    <source>
        <strain>N315</strain>
    </source>
</reference>
<reference key="2">
    <citation type="submission" date="2007-10" db="UniProtKB">
        <title>Shotgun proteomic analysis of total and membrane protein extracts of S. aureus strain N315.</title>
        <authorList>
            <person name="Vaezzadeh A.R."/>
            <person name="Deshusses J."/>
            <person name="Lescuyer P."/>
            <person name="Hochstrasser D.F."/>
        </authorList>
    </citation>
    <scope>IDENTIFICATION BY MASS SPECTROMETRY [LARGE SCALE ANALYSIS]</scope>
    <source>
        <strain>N315</strain>
    </source>
</reference>
<comment type="function">
    <text evidence="1">Catalyzes the decarboxylation of four acetate groups of uroporphyrinogen-III to yield coproporphyrinogen-III.</text>
</comment>
<comment type="catalytic activity">
    <reaction evidence="1">
        <text>uroporphyrinogen III + 4 H(+) = coproporphyrinogen III + 4 CO2</text>
        <dbReference type="Rhea" id="RHEA:19865"/>
        <dbReference type="ChEBI" id="CHEBI:15378"/>
        <dbReference type="ChEBI" id="CHEBI:16526"/>
        <dbReference type="ChEBI" id="CHEBI:57308"/>
        <dbReference type="ChEBI" id="CHEBI:57309"/>
        <dbReference type="EC" id="4.1.1.37"/>
    </reaction>
</comment>
<comment type="pathway">
    <text evidence="1">Porphyrin-containing compound metabolism; protoporphyrin-IX biosynthesis; coproporphyrinogen-III from 5-aminolevulinate: step 4/4.</text>
</comment>
<comment type="subunit">
    <text evidence="1">Homodimer.</text>
</comment>
<comment type="subcellular location">
    <subcellularLocation>
        <location evidence="1">Cytoplasm</location>
    </subcellularLocation>
</comment>
<comment type="similarity">
    <text evidence="1">Belongs to the uroporphyrinogen decarboxylase family.</text>
</comment>